<organism>
    <name type="scientific">Escherichia coli O81 (strain ED1a)</name>
    <dbReference type="NCBI Taxonomy" id="585397"/>
    <lineage>
        <taxon>Bacteria</taxon>
        <taxon>Pseudomonadati</taxon>
        <taxon>Pseudomonadota</taxon>
        <taxon>Gammaproteobacteria</taxon>
        <taxon>Enterobacterales</taxon>
        <taxon>Enterobacteriaceae</taxon>
        <taxon>Escherichia</taxon>
    </lineage>
</organism>
<evidence type="ECO:0000255" key="1">
    <source>
        <dbReference type="HAMAP-Rule" id="MF_01049"/>
    </source>
</evidence>
<protein>
    <recommendedName>
        <fullName evidence="1">L-carnitine/gamma-butyrobetaine antiporter</fullName>
    </recommendedName>
</protein>
<comment type="function">
    <text evidence="1">Catalyzes the exchange of L-carnitine for gamma-butyrobetaine.</text>
</comment>
<comment type="catalytic activity">
    <reaction evidence="1">
        <text>4-(trimethylamino)butanoate(in) + (R)-carnitine(out) = 4-(trimethylamino)butanoate(out) + (R)-carnitine(in)</text>
        <dbReference type="Rhea" id="RHEA:29427"/>
        <dbReference type="ChEBI" id="CHEBI:16244"/>
        <dbReference type="ChEBI" id="CHEBI:16347"/>
    </reaction>
</comment>
<comment type="pathway">
    <text evidence="1">Amine and polyamine metabolism; carnitine metabolism.</text>
</comment>
<comment type="subunit">
    <text evidence="1">Homotrimer.</text>
</comment>
<comment type="subcellular location">
    <subcellularLocation>
        <location evidence="1">Cell inner membrane</location>
        <topology evidence="1">Multi-pass membrane protein</topology>
    </subcellularLocation>
</comment>
<comment type="similarity">
    <text evidence="1">Belongs to the BCCT transporter (TC 2.A.15) family. CaiT subfamily.</text>
</comment>
<accession>B7MNP7</accession>
<reference key="1">
    <citation type="journal article" date="2009" name="PLoS Genet.">
        <title>Organised genome dynamics in the Escherichia coli species results in highly diverse adaptive paths.</title>
        <authorList>
            <person name="Touchon M."/>
            <person name="Hoede C."/>
            <person name="Tenaillon O."/>
            <person name="Barbe V."/>
            <person name="Baeriswyl S."/>
            <person name="Bidet P."/>
            <person name="Bingen E."/>
            <person name="Bonacorsi S."/>
            <person name="Bouchier C."/>
            <person name="Bouvet O."/>
            <person name="Calteau A."/>
            <person name="Chiapello H."/>
            <person name="Clermont O."/>
            <person name="Cruveiller S."/>
            <person name="Danchin A."/>
            <person name="Diard M."/>
            <person name="Dossat C."/>
            <person name="Karoui M.E."/>
            <person name="Frapy E."/>
            <person name="Garry L."/>
            <person name="Ghigo J.M."/>
            <person name="Gilles A.M."/>
            <person name="Johnson J."/>
            <person name="Le Bouguenec C."/>
            <person name="Lescat M."/>
            <person name="Mangenot S."/>
            <person name="Martinez-Jehanne V."/>
            <person name="Matic I."/>
            <person name="Nassif X."/>
            <person name="Oztas S."/>
            <person name="Petit M.A."/>
            <person name="Pichon C."/>
            <person name="Rouy Z."/>
            <person name="Ruf C.S."/>
            <person name="Schneider D."/>
            <person name="Tourret J."/>
            <person name="Vacherie B."/>
            <person name="Vallenet D."/>
            <person name="Medigue C."/>
            <person name="Rocha E.P.C."/>
            <person name="Denamur E."/>
        </authorList>
    </citation>
    <scope>NUCLEOTIDE SEQUENCE [LARGE SCALE GENOMIC DNA]</scope>
    <source>
        <strain>ED1a</strain>
    </source>
</reference>
<keyword id="KW-0050">Antiport</keyword>
<keyword id="KW-0997">Cell inner membrane</keyword>
<keyword id="KW-1003">Cell membrane</keyword>
<keyword id="KW-0472">Membrane</keyword>
<keyword id="KW-0812">Transmembrane</keyword>
<keyword id="KW-1133">Transmembrane helix</keyword>
<keyword id="KW-0813">Transport</keyword>
<gene>
    <name evidence="1" type="primary">caiT</name>
    <name type="ordered locus">ECED1_0039</name>
</gene>
<name>CAIT_ECO81</name>
<feature type="chain" id="PRO_1000149620" description="L-carnitine/gamma-butyrobetaine antiporter">
    <location>
        <begin position="1"/>
        <end position="504"/>
    </location>
</feature>
<feature type="transmembrane region" description="Helical" evidence="1">
    <location>
        <begin position="10"/>
        <end position="30"/>
    </location>
</feature>
<feature type="transmembrane region" description="Helical" evidence="1">
    <location>
        <begin position="51"/>
        <end position="71"/>
    </location>
</feature>
<feature type="transmembrane region" description="Helical" evidence="1">
    <location>
        <begin position="92"/>
        <end position="112"/>
    </location>
</feature>
<feature type="transmembrane region" description="Helical" evidence="1">
    <location>
        <begin position="143"/>
        <end position="163"/>
    </location>
</feature>
<feature type="transmembrane region" description="Helical" evidence="1">
    <location>
        <begin position="195"/>
        <end position="215"/>
    </location>
</feature>
<feature type="transmembrane region" description="Helical" evidence="1">
    <location>
        <begin position="231"/>
        <end position="251"/>
    </location>
</feature>
<feature type="transmembrane region" description="Helical" evidence="1">
    <location>
        <begin position="263"/>
        <end position="283"/>
    </location>
</feature>
<feature type="transmembrane region" description="Helical" evidence="1">
    <location>
        <begin position="316"/>
        <end position="336"/>
    </location>
</feature>
<feature type="transmembrane region" description="Helical" evidence="1">
    <location>
        <begin position="347"/>
        <end position="367"/>
    </location>
</feature>
<feature type="transmembrane region" description="Helical" evidence="1">
    <location>
        <begin position="398"/>
        <end position="418"/>
    </location>
</feature>
<feature type="transmembrane region" description="Helical" evidence="1">
    <location>
        <begin position="446"/>
        <end position="466"/>
    </location>
</feature>
<feature type="transmembrane region" description="Helical" evidence="1">
    <location>
        <begin position="475"/>
        <end position="495"/>
    </location>
</feature>
<proteinExistence type="inferred from homology"/>
<dbReference type="EMBL" id="CU928162">
    <property type="protein sequence ID" value="CAR06262.1"/>
    <property type="molecule type" value="Genomic_DNA"/>
</dbReference>
<dbReference type="RefSeq" id="WP_000787115.1">
    <property type="nucleotide sequence ID" value="NC_011745.1"/>
</dbReference>
<dbReference type="SMR" id="B7MNP7"/>
<dbReference type="KEGG" id="ecq:ECED1_0039"/>
<dbReference type="HOGENOM" id="CLU_010118_6_0_6"/>
<dbReference type="UniPathway" id="UPA00117"/>
<dbReference type="Proteomes" id="UP000000748">
    <property type="component" value="Chromosome"/>
</dbReference>
<dbReference type="GO" id="GO:0005886">
    <property type="term" value="C:plasma membrane"/>
    <property type="evidence" value="ECO:0007669"/>
    <property type="project" value="UniProtKB-SubCell"/>
</dbReference>
<dbReference type="GO" id="GO:0044667">
    <property type="term" value="F:(R)-carnitine:4-(trimethylammonio)butanoate antiporter activity"/>
    <property type="evidence" value="ECO:0007669"/>
    <property type="project" value="UniProtKB-UniRule"/>
</dbReference>
<dbReference type="GO" id="GO:1900751">
    <property type="term" value="P:4-(trimethylammonio)butanoate transport"/>
    <property type="evidence" value="ECO:0007669"/>
    <property type="project" value="InterPro"/>
</dbReference>
<dbReference type="GO" id="GO:0009437">
    <property type="term" value="P:carnitine metabolic process"/>
    <property type="evidence" value="ECO:0007669"/>
    <property type="project" value="UniProtKB-UniRule"/>
</dbReference>
<dbReference type="HAMAP" id="MF_01049">
    <property type="entry name" value="CaiT"/>
    <property type="match status" value="1"/>
</dbReference>
<dbReference type="InterPro" id="IPR018093">
    <property type="entry name" value="BCCT_CS"/>
</dbReference>
<dbReference type="InterPro" id="IPR000060">
    <property type="entry name" value="BCCT_transptr"/>
</dbReference>
<dbReference type="InterPro" id="IPR023449">
    <property type="entry name" value="BCCT_transptr_CaiT"/>
</dbReference>
<dbReference type="NCBIfam" id="TIGR00842">
    <property type="entry name" value="bcct"/>
    <property type="match status" value="1"/>
</dbReference>
<dbReference type="NCBIfam" id="NF002887">
    <property type="entry name" value="PRK03356.1"/>
    <property type="match status" value="1"/>
</dbReference>
<dbReference type="PANTHER" id="PTHR30047">
    <property type="entry name" value="HIGH-AFFINITY CHOLINE TRANSPORT PROTEIN-RELATED"/>
    <property type="match status" value="1"/>
</dbReference>
<dbReference type="PANTHER" id="PTHR30047:SF11">
    <property type="entry name" value="L-CARNITINE_GAMMA-BUTYROBETAINE ANTIPORTER"/>
    <property type="match status" value="1"/>
</dbReference>
<dbReference type="Pfam" id="PF02028">
    <property type="entry name" value="BCCT"/>
    <property type="match status" value="1"/>
</dbReference>
<dbReference type="PROSITE" id="PS01303">
    <property type="entry name" value="BCCT"/>
    <property type="match status" value="1"/>
</dbReference>
<sequence length="504" mass="56603">MKNEKRKTGIEPKVFFPPLIIVGILCWLTVRDLDAANVVINAVFSYVTNVWGWAFEWYMVVMLFGWFWLVFGPYAKKRLGNEPPEFSTASWIFMMFASCTSAAVLFWGSIEIYYYISTPPFGLEPNSTGAKELGLAYSLFHWGPLPWATYSFLSVAFAYFFFVRKMEVIRPSSTLVPLVGEKHAKGLFGTIVDNFYLVALIFAMGTSLGLATPLVTECMQWLFGIPHTLQLDAIIITCWIILNTICVACGLQKGVRIASDVRSYLSFLMLGWVFIVSGASFIMNYFTDSVGMLLMYLPRMLFYTDPIAKGGFPQGWTVFYWAWWVIYAIQMSIFLARISRGRTVRELCFGMVLGLTASTWILWTVLGSNTLLLIDKNIINIPNLIEQYGVARAIIETWAALPLSTATMWGFFILCFIATVTLVNACSYTLAMSTCREVRDGEEPPLLVRIGWSVLVGIIGIVLLALGGLKPIQTAIIAGGCPLFFVNIMVTLSFIKDAKQNWKD</sequence>